<gene>
    <name evidence="2" type="primary">mdtK</name>
    <name type="ordered locus">Ecok1_15500</name>
    <name type="ORF">APECO1_743</name>
</gene>
<dbReference type="EMBL" id="CP000468">
    <property type="protein sequence ID" value="ABJ01044.1"/>
    <property type="molecule type" value="Genomic_DNA"/>
</dbReference>
<dbReference type="RefSeq" id="WP_001174963.1">
    <property type="nucleotide sequence ID" value="NZ_CADILS010000002.1"/>
</dbReference>
<dbReference type="SMR" id="A1ABK4"/>
<dbReference type="KEGG" id="ecv:APECO1_743"/>
<dbReference type="HOGENOM" id="CLU_012893_6_0_6"/>
<dbReference type="Proteomes" id="UP000008216">
    <property type="component" value="Chromosome"/>
</dbReference>
<dbReference type="GO" id="GO:0005886">
    <property type="term" value="C:plasma membrane"/>
    <property type="evidence" value="ECO:0007669"/>
    <property type="project" value="UniProtKB-SubCell"/>
</dbReference>
<dbReference type="GO" id="GO:0015297">
    <property type="term" value="F:antiporter activity"/>
    <property type="evidence" value="ECO:0007669"/>
    <property type="project" value="UniProtKB-UniRule"/>
</dbReference>
<dbReference type="GO" id="GO:0042910">
    <property type="term" value="F:xenobiotic transmembrane transporter activity"/>
    <property type="evidence" value="ECO:0007669"/>
    <property type="project" value="UniProtKB-UniRule"/>
</dbReference>
<dbReference type="GO" id="GO:0006814">
    <property type="term" value="P:sodium ion transport"/>
    <property type="evidence" value="ECO:0007669"/>
    <property type="project" value="UniProtKB-UniRule"/>
</dbReference>
<dbReference type="GO" id="GO:0006855">
    <property type="term" value="P:xenobiotic transmembrane transport"/>
    <property type="evidence" value="ECO:0007669"/>
    <property type="project" value="UniProtKB-UniRule"/>
</dbReference>
<dbReference type="CDD" id="cd13131">
    <property type="entry name" value="MATE_NorM_like"/>
    <property type="match status" value="1"/>
</dbReference>
<dbReference type="HAMAP" id="MF_00400">
    <property type="entry name" value="MdtK"/>
    <property type="match status" value="1"/>
</dbReference>
<dbReference type="InterPro" id="IPR002528">
    <property type="entry name" value="MATE_fam"/>
</dbReference>
<dbReference type="InterPro" id="IPR050222">
    <property type="entry name" value="MATE_MdtK"/>
</dbReference>
<dbReference type="InterPro" id="IPR048279">
    <property type="entry name" value="MdtK-like"/>
</dbReference>
<dbReference type="InterPro" id="IPR022913">
    <property type="entry name" value="Multidrug-R_MdtK"/>
</dbReference>
<dbReference type="NCBIfam" id="TIGR00797">
    <property type="entry name" value="matE"/>
    <property type="match status" value="1"/>
</dbReference>
<dbReference type="PANTHER" id="PTHR43298:SF2">
    <property type="entry name" value="FMN_FAD EXPORTER YEEO-RELATED"/>
    <property type="match status" value="1"/>
</dbReference>
<dbReference type="PANTHER" id="PTHR43298">
    <property type="entry name" value="MULTIDRUG RESISTANCE PROTEIN NORM-RELATED"/>
    <property type="match status" value="1"/>
</dbReference>
<dbReference type="Pfam" id="PF01554">
    <property type="entry name" value="MatE"/>
    <property type="match status" value="2"/>
</dbReference>
<dbReference type="PIRSF" id="PIRSF006603">
    <property type="entry name" value="DinF"/>
    <property type="match status" value="1"/>
</dbReference>
<evidence type="ECO:0000255" key="1"/>
<evidence type="ECO:0000255" key="2">
    <source>
        <dbReference type="HAMAP-Rule" id="MF_00400"/>
    </source>
</evidence>
<sequence>MQKYISEARLLLALAIPVILAQIAQTAMGFVDTVMAGGYSATDMAAVAIGTSIWLPAILFGHGLLLALTPVIAQLNGSGRRERIAHQVRQGFWLAGFVSVLIMLVLWNAGYIIRSMQNIDPALADKAVGYLRALLWGAPGYLFFQVARNQCEGLAKTKPGMVMGFIGLLVNIPVNYIFIYGHFGMPELGGVGCGVATAAVYWVMFLAMVSYIKRARSMRDIRNEKGTAKPDPAVMKRLIQLGLPIALALFFEVTLFAVVALLVSPLGIVDVAGHQIALNFSSLMFVLPMSLAAAVTIRVGYRLGQGSTLDAQTAARTGLMVGVCMATLTAIFTVSLREQIALLYNDNPEVVTLAAHLMLLAAVYQISDSIQVIGSGILRGYKDTRSIFYITFTAYWVLGLPSGYILALTDLVVEPMGPAGFWIGFIIGLTSAAIMMMLRMRFLQRLPSAIILQRAAR</sequence>
<reference key="1">
    <citation type="journal article" date="2007" name="J. Bacteriol.">
        <title>The genome sequence of avian pathogenic Escherichia coli strain O1:K1:H7 shares strong similarities with human extraintestinal pathogenic E. coli genomes.</title>
        <authorList>
            <person name="Johnson T.J."/>
            <person name="Kariyawasam S."/>
            <person name="Wannemuehler Y."/>
            <person name="Mangiamele P."/>
            <person name="Johnson S.J."/>
            <person name="Doetkott C."/>
            <person name="Skyberg J.A."/>
            <person name="Lynne A.M."/>
            <person name="Johnson J.R."/>
            <person name="Nolan L.K."/>
        </authorList>
    </citation>
    <scope>NUCLEOTIDE SEQUENCE [LARGE SCALE GENOMIC DNA]</scope>
</reference>
<comment type="function">
    <text evidence="2">Multidrug efflux pump that functions probably as a Na(+)/drug antiporter.</text>
</comment>
<comment type="subcellular location">
    <subcellularLocation>
        <location evidence="2">Cell inner membrane</location>
        <topology evidence="2">Multi-pass membrane protein</topology>
    </subcellularLocation>
</comment>
<comment type="similarity">
    <text evidence="2">Belongs to the multi antimicrobial extrusion (MATE) (TC 2.A.66.1) family. MdtK subfamily.</text>
</comment>
<name>MDTK_ECOK1</name>
<organism>
    <name type="scientific">Escherichia coli O1:K1 / APEC</name>
    <dbReference type="NCBI Taxonomy" id="405955"/>
    <lineage>
        <taxon>Bacteria</taxon>
        <taxon>Pseudomonadati</taxon>
        <taxon>Pseudomonadota</taxon>
        <taxon>Gammaproteobacteria</taxon>
        <taxon>Enterobacterales</taxon>
        <taxon>Enterobacteriaceae</taxon>
        <taxon>Escherichia</taxon>
    </lineage>
</organism>
<protein>
    <recommendedName>
        <fullName evidence="2">Multidrug resistance protein MdtK</fullName>
    </recommendedName>
    <alternativeName>
        <fullName evidence="2">Multidrug-efflux transporter</fullName>
    </alternativeName>
</protein>
<feature type="chain" id="PRO_0000279850" description="Multidrug resistance protein MdtK">
    <location>
        <begin position="1"/>
        <end position="457"/>
    </location>
</feature>
<feature type="topological domain" description="Cytoplasmic" evidence="1">
    <location>
        <begin position="1"/>
        <end position="10"/>
    </location>
</feature>
<feature type="transmembrane region" description="Helical" evidence="2">
    <location>
        <begin position="11"/>
        <end position="31"/>
    </location>
</feature>
<feature type="topological domain" description="Periplasmic" evidence="1">
    <location>
        <begin position="32"/>
        <end position="52"/>
    </location>
</feature>
<feature type="transmembrane region" description="Helical" evidence="2">
    <location>
        <begin position="53"/>
        <end position="73"/>
    </location>
</feature>
<feature type="topological domain" description="Cytoplasmic" evidence="1">
    <location>
        <begin position="74"/>
        <end position="92"/>
    </location>
</feature>
<feature type="transmembrane region" description="Helical" evidence="2">
    <location>
        <begin position="93"/>
        <end position="113"/>
    </location>
</feature>
<feature type="topological domain" description="Periplasmic" evidence="1">
    <location>
        <begin position="114"/>
        <end position="126"/>
    </location>
</feature>
<feature type="transmembrane region" description="Helical" evidence="2">
    <location>
        <begin position="127"/>
        <end position="147"/>
    </location>
</feature>
<feature type="topological domain" description="Cytoplasmic" evidence="1">
    <location>
        <begin position="148"/>
        <end position="159"/>
    </location>
</feature>
<feature type="transmembrane region" description="Helical" evidence="2">
    <location>
        <begin position="160"/>
        <end position="180"/>
    </location>
</feature>
<feature type="topological domain" description="Periplasmic" evidence="1">
    <location>
        <begin position="181"/>
        <end position="188"/>
    </location>
</feature>
<feature type="transmembrane region" description="Helical" evidence="2">
    <location>
        <begin position="189"/>
        <end position="209"/>
    </location>
</feature>
<feature type="topological domain" description="Cytoplasmic" evidence="1">
    <location>
        <begin position="210"/>
        <end position="242"/>
    </location>
</feature>
<feature type="transmembrane region" description="Helical" evidence="2">
    <location>
        <begin position="243"/>
        <end position="263"/>
    </location>
</feature>
<feature type="topological domain" description="Periplasmic" evidence="1">
    <location>
        <begin position="264"/>
        <end position="275"/>
    </location>
</feature>
<feature type="transmembrane region" description="Helical" evidence="2">
    <location>
        <begin position="276"/>
        <end position="296"/>
    </location>
</feature>
<feature type="topological domain" description="Cytoplasmic" evidence="1">
    <location>
        <begin position="297"/>
        <end position="313"/>
    </location>
</feature>
<feature type="transmembrane region" description="Helical" evidence="2">
    <location>
        <begin position="314"/>
        <end position="334"/>
    </location>
</feature>
<feature type="topological domain" description="Periplasmic" evidence="1">
    <location>
        <begin position="335"/>
        <end position="349"/>
    </location>
</feature>
<feature type="transmembrane region" description="Helical" evidence="2">
    <location>
        <begin position="350"/>
        <end position="370"/>
    </location>
</feature>
<feature type="topological domain" description="Cytoplasmic" evidence="1">
    <location>
        <begin position="371"/>
        <end position="386"/>
    </location>
</feature>
<feature type="transmembrane region" description="Helical" evidence="2">
    <location>
        <begin position="387"/>
        <end position="407"/>
    </location>
</feature>
<feature type="topological domain" description="Periplasmic" evidence="1">
    <location>
        <begin position="408"/>
        <end position="417"/>
    </location>
</feature>
<feature type="transmembrane region" description="Helical" evidence="2">
    <location>
        <begin position="418"/>
        <end position="438"/>
    </location>
</feature>
<feature type="topological domain" description="Cytoplasmic" evidence="1">
    <location>
        <begin position="439"/>
        <end position="457"/>
    </location>
</feature>
<keyword id="KW-0050">Antiport</keyword>
<keyword id="KW-0997">Cell inner membrane</keyword>
<keyword id="KW-1003">Cell membrane</keyword>
<keyword id="KW-0406">Ion transport</keyword>
<keyword id="KW-0472">Membrane</keyword>
<keyword id="KW-1185">Reference proteome</keyword>
<keyword id="KW-0915">Sodium</keyword>
<keyword id="KW-0739">Sodium transport</keyword>
<keyword id="KW-0812">Transmembrane</keyword>
<keyword id="KW-1133">Transmembrane helix</keyword>
<keyword id="KW-0813">Transport</keyword>
<proteinExistence type="inferred from homology"/>
<accession>A1ABK4</accession>